<name>Y453_BACHK</name>
<keyword id="KW-0963">Cytoplasm</keyword>
<keyword id="KW-0238">DNA-binding</keyword>
<keyword id="KW-0804">Transcription</keyword>
<keyword id="KW-0805">Transcription regulation</keyword>
<dbReference type="EMBL" id="AE017355">
    <property type="protein sequence ID" value="AAT59031.1"/>
    <property type="molecule type" value="Genomic_DNA"/>
</dbReference>
<dbReference type="RefSeq" id="WP_000532950.1">
    <property type="nucleotide sequence ID" value="NC_005957.1"/>
</dbReference>
<dbReference type="RefSeq" id="YP_034801.1">
    <property type="nucleotide sequence ID" value="NC_005957.1"/>
</dbReference>
<dbReference type="SMR" id="Q6HNR9"/>
<dbReference type="KEGG" id="btk:BT9727_0453"/>
<dbReference type="PATRIC" id="fig|281309.8.peg.482"/>
<dbReference type="HOGENOM" id="CLU_062974_2_0_9"/>
<dbReference type="Proteomes" id="UP000001301">
    <property type="component" value="Chromosome"/>
</dbReference>
<dbReference type="GO" id="GO:0005829">
    <property type="term" value="C:cytosol"/>
    <property type="evidence" value="ECO:0007669"/>
    <property type="project" value="TreeGrafter"/>
</dbReference>
<dbReference type="GO" id="GO:0003677">
    <property type="term" value="F:DNA binding"/>
    <property type="evidence" value="ECO:0007669"/>
    <property type="project" value="UniProtKB-UniRule"/>
</dbReference>
<dbReference type="GO" id="GO:0006355">
    <property type="term" value="P:regulation of DNA-templated transcription"/>
    <property type="evidence" value="ECO:0007669"/>
    <property type="project" value="UniProtKB-UniRule"/>
</dbReference>
<dbReference type="FunFam" id="1.10.10.200:FF:000003">
    <property type="entry name" value="Probable transcriptional regulatory protein YeeN"/>
    <property type="match status" value="1"/>
</dbReference>
<dbReference type="FunFam" id="3.30.70.980:FF:000004">
    <property type="entry name" value="Probable transcriptional regulatory protein YeeN"/>
    <property type="match status" value="1"/>
</dbReference>
<dbReference type="Gene3D" id="1.10.10.200">
    <property type="match status" value="1"/>
</dbReference>
<dbReference type="Gene3D" id="3.30.70.980">
    <property type="match status" value="2"/>
</dbReference>
<dbReference type="HAMAP" id="MF_00693">
    <property type="entry name" value="Transcrip_reg_TACO1"/>
    <property type="match status" value="1"/>
</dbReference>
<dbReference type="HAMAP" id="MF_00918">
    <property type="entry name" value="Transcrip_reg_TACO1_YeeN"/>
    <property type="match status" value="1"/>
</dbReference>
<dbReference type="InterPro" id="IPR017856">
    <property type="entry name" value="Integrase-like_N"/>
</dbReference>
<dbReference type="InterPro" id="IPR048300">
    <property type="entry name" value="TACO1_YebC-like_2nd/3rd_dom"/>
</dbReference>
<dbReference type="InterPro" id="IPR049083">
    <property type="entry name" value="TACO1_YebC_N"/>
</dbReference>
<dbReference type="InterPro" id="IPR002876">
    <property type="entry name" value="Transcrip_reg_TACO1-like"/>
</dbReference>
<dbReference type="InterPro" id="IPR026564">
    <property type="entry name" value="Transcrip_reg_TACO1-like_dom3"/>
</dbReference>
<dbReference type="InterPro" id="IPR026562">
    <property type="entry name" value="Transcrip_reg_TACO1_YeeN"/>
</dbReference>
<dbReference type="InterPro" id="IPR029072">
    <property type="entry name" value="YebC-like"/>
</dbReference>
<dbReference type="NCBIfam" id="NF001030">
    <property type="entry name" value="PRK00110.1"/>
    <property type="match status" value="1"/>
</dbReference>
<dbReference type="NCBIfam" id="NF009044">
    <property type="entry name" value="PRK12378.1"/>
    <property type="match status" value="1"/>
</dbReference>
<dbReference type="NCBIfam" id="TIGR01033">
    <property type="entry name" value="YebC/PmpR family DNA-binding transcriptional regulator"/>
    <property type="match status" value="1"/>
</dbReference>
<dbReference type="PANTHER" id="PTHR12532">
    <property type="entry name" value="TRANSLATIONAL ACTIVATOR OF CYTOCHROME C OXIDASE 1"/>
    <property type="match status" value="1"/>
</dbReference>
<dbReference type="PANTHER" id="PTHR12532:SF0">
    <property type="entry name" value="TRANSLATIONAL ACTIVATOR OF CYTOCHROME C OXIDASE 1"/>
    <property type="match status" value="1"/>
</dbReference>
<dbReference type="Pfam" id="PF20772">
    <property type="entry name" value="TACO1_YebC_N"/>
    <property type="match status" value="1"/>
</dbReference>
<dbReference type="Pfam" id="PF01709">
    <property type="entry name" value="Transcrip_reg"/>
    <property type="match status" value="1"/>
</dbReference>
<dbReference type="SUPFAM" id="SSF75625">
    <property type="entry name" value="YebC-like"/>
    <property type="match status" value="1"/>
</dbReference>
<gene>
    <name type="ordered locus">BT9727_0453</name>
</gene>
<proteinExistence type="inferred from homology"/>
<organism>
    <name type="scientific">Bacillus thuringiensis subsp. konkukian (strain 97-27)</name>
    <dbReference type="NCBI Taxonomy" id="281309"/>
    <lineage>
        <taxon>Bacteria</taxon>
        <taxon>Bacillati</taxon>
        <taxon>Bacillota</taxon>
        <taxon>Bacilli</taxon>
        <taxon>Bacillales</taxon>
        <taxon>Bacillaceae</taxon>
        <taxon>Bacillus</taxon>
        <taxon>Bacillus cereus group</taxon>
    </lineage>
</organism>
<protein>
    <recommendedName>
        <fullName evidence="1">Probable transcriptional regulatory protein BT9727_0453</fullName>
    </recommendedName>
</protein>
<accession>Q6HNR9</accession>
<comment type="subcellular location">
    <subcellularLocation>
        <location evidence="1">Cytoplasm</location>
    </subcellularLocation>
</comment>
<comment type="similarity">
    <text evidence="1">Belongs to the TACO1 family. YeeN subfamily.</text>
</comment>
<evidence type="ECO:0000255" key="1">
    <source>
        <dbReference type="HAMAP-Rule" id="MF_00918"/>
    </source>
</evidence>
<sequence length="239" mass="26372">MGRKWNNIKDKKASKDANTSRIYAKFGREIYVAAKQGEPDPESNQALRVVLERAKTYNVPRTIIDRAVEKAKGGSEENYDELRYEGFGPNGAMVIVDTLTNNVNRTAADVRAAFSKNSGNMGVNGSVAYMFDATAVIGLEGKTSDEVLEILMEADVDARDILEEEDAVIVYAEPEQFHAVQSALKDAGVEEFTVAELTMLAQNDVTLPEDAQAQFEKMVDALEDLEDVQQVYHNVDLGE</sequence>
<reference key="1">
    <citation type="journal article" date="2006" name="J. Bacteriol.">
        <title>Pathogenomic sequence analysis of Bacillus cereus and Bacillus thuringiensis isolates closely related to Bacillus anthracis.</title>
        <authorList>
            <person name="Han C.S."/>
            <person name="Xie G."/>
            <person name="Challacombe J.F."/>
            <person name="Altherr M.R."/>
            <person name="Bhotika S.S."/>
            <person name="Bruce D."/>
            <person name="Campbell C.S."/>
            <person name="Campbell M.L."/>
            <person name="Chen J."/>
            <person name="Chertkov O."/>
            <person name="Cleland C."/>
            <person name="Dimitrijevic M."/>
            <person name="Doggett N.A."/>
            <person name="Fawcett J.J."/>
            <person name="Glavina T."/>
            <person name="Goodwin L.A."/>
            <person name="Hill K.K."/>
            <person name="Hitchcock P."/>
            <person name="Jackson P.J."/>
            <person name="Keim P."/>
            <person name="Kewalramani A.R."/>
            <person name="Longmire J."/>
            <person name="Lucas S."/>
            <person name="Malfatti S."/>
            <person name="McMurry K."/>
            <person name="Meincke L.J."/>
            <person name="Misra M."/>
            <person name="Moseman B.L."/>
            <person name="Mundt M."/>
            <person name="Munk A.C."/>
            <person name="Okinaka R.T."/>
            <person name="Parson-Quintana B."/>
            <person name="Reilly L.P."/>
            <person name="Richardson P."/>
            <person name="Robinson D.L."/>
            <person name="Rubin E."/>
            <person name="Saunders E."/>
            <person name="Tapia R."/>
            <person name="Tesmer J.G."/>
            <person name="Thayer N."/>
            <person name="Thompson L.S."/>
            <person name="Tice H."/>
            <person name="Ticknor L.O."/>
            <person name="Wills P.L."/>
            <person name="Brettin T.S."/>
            <person name="Gilna P."/>
        </authorList>
    </citation>
    <scope>NUCLEOTIDE SEQUENCE [LARGE SCALE GENOMIC DNA]</scope>
    <source>
        <strain>97-27</strain>
    </source>
</reference>
<feature type="chain" id="PRO_0000175758" description="Probable transcriptional regulatory protein BT9727_0453">
    <location>
        <begin position="1"/>
        <end position="239"/>
    </location>
</feature>